<keyword id="KW-0963">Cytoplasm</keyword>
<keyword id="KW-0240">DNA-directed RNA polymerase</keyword>
<keyword id="KW-0548">Nucleotidyltransferase</keyword>
<keyword id="KW-1185">Reference proteome</keyword>
<keyword id="KW-0804">Transcription</keyword>
<keyword id="KW-0808">Transferase</keyword>
<dbReference type="EC" id="2.7.7.6" evidence="1"/>
<dbReference type="EMBL" id="BA000023">
    <property type="protein sequence ID" value="BAB67370.1"/>
    <property type="molecule type" value="Genomic_DNA"/>
</dbReference>
<dbReference type="RefSeq" id="WP_010980345.1">
    <property type="nucleotide sequence ID" value="NC_003106.2"/>
</dbReference>
<dbReference type="SMR" id="Q96YA7"/>
<dbReference type="STRING" id="273063.STK_22615"/>
<dbReference type="GeneID" id="1460343"/>
<dbReference type="KEGG" id="sto:STK_22615"/>
<dbReference type="PATRIC" id="fig|273063.9.peg.2564"/>
<dbReference type="eggNOG" id="arCOG04111">
    <property type="taxonomic scope" value="Archaea"/>
</dbReference>
<dbReference type="OrthoDB" id="24205at2157"/>
<dbReference type="Proteomes" id="UP000001015">
    <property type="component" value="Chromosome"/>
</dbReference>
<dbReference type="GO" id="GO:0005737">
    <property type="term" value="C:cytoplasm"/>
    <property type="evidence" value="ECO:0007669"/>
    <property type="project" value="UniProtKB-SubCell"/>
</dbReference>
<dbReference type="GO" id="GO:0000428">
    <property type="term" value="C:DNA-directed RNA polymerase complex"/>
    <property type="evidence" value="ECO:0007669"/>
    <property type="project" value="UniProtKB-KW"/>
</dbReference>
<dbReference type="GO" id="GO:0003677">
    <property type="term" value="F:DNA binding"/>
    <property type="evidence" value="ECO:0007669"/>
    <property type="project" value="InterPro"/>
</dbReference>
<dbReference type="GO" id="GO:0003899">
    <property type="term" value="F:DNA-directed RNA polymerase activity"/>
    <property type="evidence" value="ECO:0007669"/>
    <property type="project" value="UniProtKB-UniRule"/>
</dbReference>
<dbReference type="GO" id="GO:0046983">
    <property type="term" value="F:protein dimerization activity"/>
    <property type="evidence" value="ECO:0007669"/>
    <property type="project" value="InterPro"/>
</dbReference>
<dbReference type="GO" id="GO:0006351">
    <property type="term" value="P:DNA-templated transcription"/>
    <property type="evidence" value="ECO:0007669"/>
    <property type="project" value="UniProtKB-UniRule"/>
</dbReference>
<dbReference type="CDD" id="cd06927">
    <property type="entry name" value="RNAP_L"/>
    <property type="match status" value="1"/>
</dbReference>
<dbReference type="Gene3D" id="3.30.1360.10">
    <property type="entry name" value="RNA polymerase, RBP11-like subunit"/>
    <property type="match status" value="1"/>
</dbReference>
<dbReference type="HAMAP" id="MF_00261">
    <property type="entry name" value="RNApol_arch_Rpo11"/>
    <property type="match status" value="1"/>
</dbReference>
<dbReference type="InterPro" id="IPR036603">
    <property type="entry name" value="RBP11-like"/>
</dbReference>
<dbReference type="InterPro" id="IPR009025">
    <property type="entry name" value="RBP11-like_dimer"/>
</dbReference>
<dbReference type="InterPro" id="IPR008193">
    <property type="entry name" value="RNA_pol_Rpb11_13-16kDa_CS"/>
</dbReference>
<dbReference type="InterPro" id="IPR022905">
    <property type="entry name" value="Rpo11-like"/>
</dbReference>
<dbReference type="NCBIfam" id="NF002233">
    <property type="entry name" value="PRK01146.1-1"/>
    <property type="match status" value="1"/>
</dbReference>
<dbReference type="PANTHER" id="PTHR13946">
    <property type="entry name" value="DNA-DIRECTED RNA POLYMERASE I,II,III"/>
    <property type="match status" value="1"/>
</dbReference>
<dbReference type="PANTHER" id="PTHR13946:SF28">
    <property type="entry name" value="DNA-DIRECTED RNA POLYMERASES I AND III SUBUNIT RPAC2"/>
    <property type="match status" value="1"/>
</dbReference>
<dbReference type="Pfam" id="PF13656">
    <property type="entry name" value="RNA_pol_L_2"/>
    <property type="match status" value="1"/>
</dbReference>
<dbReference type="SUPFAM" id="SSF55257">
    <property type="entry name" value="RBP11-like subunits of RNA polymerase"/>
    <property type="match status" value="1"/>
</dbReference>
<dbReference type="PROSITE" id="PS01154">
    <property type="entry name" value="RNA_POL_L_13KD"/>
    <property type="match status" value="1"/>
</dbReference>
<proteinExistence type="inferred from homology"/>
<sequence length="93" mass="10454">MEIKILRSGENYLELQIDGEEHTVGNLLKGYLLKVPGVKFASYSKPHPLIDSIILKIMTDGSISPKEALVKAIELAEEDTNKFIEEVKSIEKR</sequence>
<name>RPO11_SULTO</name>
<organism>
    <name type="scientific">Sulfurisphaera tokodaii (strain DSM 16993 / JCM 10545 / NBRC 100140 / 7)</name>
    <name type="common">Sulfolobus tokodaii</name>
    <dbReference type="NCBI Taxonomy" id="273063"/>
    <lineage>
        <taxon>Archaea</taxon>
        <taxon>Thermoproteota</taxon>
        <taxon>Thermoprotei</taxon>
        <taxon>Sulfolobales</taxon>
        <taxon>Sulfolobaceae</taxon>
        <taxon>Sulfurisphaera</taxon>
    </lineage>
</organism>
<evidence type="ECO:0000255" key="1">
    <source>
        <dbReference type="HAMAP-Rule" id="MF_00261"/>
    </source>
</evidence>
<comment type="function">
    <text evidence="1">DNA-dependent RNA polymerase (RNAP) catalyzes the transcription of DNA into RNA using the four ribonucleoside triphosphates as substrates.</text>
</comment>
<comment type="catalytic activity">
    <reaction evidence="1">
        <text>RNA(n) + a ribonucleoside 5'-triphosphate = RNA(n+1) + diphosphate</text>
        <dbReference type="Rhea" id="RHEA:21248"/>
        <dbReference type="Rhea" id="RHEA-COMP:14527"/>
        <dbReference type="Rhea" id="RHEA-COMP:17342"/>
        <dbReference type="ChEBI" id="CHEBI:33019"/>
        <dbReference type="ChEBI" id="CHEBI:61557"/>
        <dbReference type="ChEBI" id="CHEBI:140395"/>
        <dbReference type="EC" id="2.7.7.6"/>
    </reaction>
</comment>
<comment type="subunit">
    <text evidence="1">Part of the RNA polymerase complex.</text>
</comment>
<comment type="subcellular location">
    <subcellularLocation>
        <location evidence="1">Cytoplasm</location>
    </subcellularLocation>
</comment>
<comment type="similarity">
    <text evidence="1">Belongs to the archaeal Rpo11/eukaryotic RPB11/RPC19 RNA polymerase subunit family.</text>
</comment>
<protein>
    <recommendedName>
        <fullName evidence="1">DNA-directed RNA polymerase subunit Rpo11</fullName>
        <ecNumber evidence="1">2.7.7.6</ecNumber>
    </recommendedName>
    <alternativeName>
        <fullName evidence="1">DNA-directed RNA polymerase subunit L</fullName>
    </alternativeName>
</protein>
<reference key="1">
    <citation type="journal article" date="2001" name="DNA Res.">
        <title>Complete genome sequence of an aerobic thermoacidophilic Crenarchaeon, Sulfolobus tokodaii strain7.</title>
        <authorList>
            <person name="Kawarabayasi Y."/>
            <person name="Hino Y."/>
            <person name="Horikawa H."/>
            <person name="Jin-no K."/>
            <person name="Takahashi M."/>
            <person name="Sekine M."/>
            <person name="Baba S."/>
            <person name="Ankai A."/>
            <person name="Kosugi H."/>
            <person name="Hosoyama A."/>
            <person name="Fukui S."/>
            <person name="Nagai Y."/>
            <person name="Nishijima K."/>
            <person name="Otsuka R."/>
            <person name="Nakazawa H."/>
            <person name="Takamiya M."/>
            <person name="Kato Y."/>
            <person name="Yoshizawa T."/>
            <person name="Tanaka T."/>
            <person name="Kudoh Y."/>
            <person name="Yamazaki J."/>
            <person name="Kushida N."/>
            <person name="Oguchi A."/>
            <person name="Aoki K."/>
            <person name="Masuda S."/>
            <person name="Yanagii M."/>
            <person name="Nishimura M."/>
            <person name="Yamagishi A."/>
            <person name="Oshima T."/>
            <person name="Kikuchi H."/>
        </authorList>
    </citation>
    <scope>NUCLEOTIDE SEQUENCE [LARGE SCALE GENOMIC DNA]</scope>
    <source>
        <strain>DSM 16993 / JCM 10545 / NBRC 100140 / 7</strain>
    </source>
</reference>
<gene>
    <name evidence="1" type="primary">rpo11</name>
    <name evidence="1" type="synonym">rpoL</name>
    <name type="ordered locus">STK_22615</name>
    <name type="ORF">STS238</name>
</gene>
<feature type="chain" id="PRO_0000149340" description="DNA-directed RNA polymerase subunit Rpo11">
    <location>
        <begin position="1"/>
        <end position="93"/>
    </location>
</feature>
<accession>Q96YA7</accession>